<organism>
    <name type="scientific">Francisella tularensis subsp. novicida (strain U112)</name>
    <dbReference type="NCBI Taxonomy" id="401614"/>
    <lineage>
        <taxon>Bacteria</taxon>
        <taxon>Pseudomonadati</taxon>
        <taxon>Pseudomonadota</taxon>
        <taxon>Gammaproteobacteria</taxon>
        <taxon>Thiotrichales</taxon>
        <taxon>Francisellaceae</taxon>
        <taxon>Francisella</taxon>
    </lineage>
</organism>
<feature type="chain" id="PRO_1000005931" description="DNA-directed RNA polymerase subunit omega">
    <location>
        <begin position="1"/>
        <end position="72"/>
    </location>
</feature>
<name>RPOZ_FRATN</name>
<gene>
    <name evidence="1" type="primary">rpoZ</name>
    <name type="ordered locus">FTN_0613</name>
</gene>
<dbReference type="EC" id="2.7.7.6" evidence="1"/>
<dbReference type="EMBL" id="CP000439">
    <property type="protein sequence ID" value="ABK89508.1"/>
    <property type="molecule type" value="Genomic_DNA"/>
</dbReference>
<dbReference type="RefSeq" id="WP_003019409.1">
    <property type="nucleotide sequence ID" value="NZ_CP009633.1"/>
</dbReference>
<dbReference type="SMR" id="A0Q5J3"/>
<dbReference type="KEGG" id="ftn:FTN_0613"/>
<dbReference type="KEGG" id="ftx:AW25_1414"/>
<dbReference type="BioCyc" id="FTUL401614:G1G75-638-MONOMER"/>
<dbReference type="Proteomes" id="UP000000762">
    <property type="component" value="Chromosome"/>
</dbReference>
<dbReference type="GO" id="GO:0000428">
    <property type="term" value="C:DNA-directed RNA polymerase complex"/>
    <property type="evidence" value="ECO:0007669"/>
    <property type="project" value="UniProtKB-KW"/>
</dbReference>
<dbReference type="GO" id="GO:0003677">
    <property type="term" value="F:DNA binding"/>
    <property type="evidence" value="ECO:0007669"/>
    <property type="project" value="UniProtKB-UniRule"/>
</dbReference>
<dbReference type="GO" id="GO:0003899">
    <property type="term" value="F:DNA-directed RNA polymerase activity"/>
    <property type="evidence" value="ECO:0007669"/>
    <property type="project" value="UniProtKB-UniRule"/>
</dbReference>
<dbReference type="GO" id="GO:0006351">
    <property type="term" value="P:DNA-templated transcription"/>
    <property type="evidence" value="ECO:0007669"/>
    <property type="project" value="UniProtKB-UniRule"/>
</dbReference>
<dbReference type="Gene3D" id="3.90.940.10">
    <property type="match status" value="1"/>
</dbReference>
<dbReference type="HAMAP" id="MF_00366">
    <property type="entry name" value="RNApol_bact_RpoZ"/>
    <property type="match status" value="1"/>
</dbReference>
<dbReference type="InterPro" id="IPR003716">
    <property type="entry name" value="DNA-dir_RNA_pol_omega"/>
</dbReference>
<dbReference type="InterPro" id="IPR006110">
    <property type="entry name" value="Pol_omega/Rpo6/RPB6"/>
</dbReference>
<dbReference type="InterPro" id="IPR036161">
    <property type="entry name" value="RPB6/omega-like_sf"/>
</dbReference>
<dbReference type="NCBIfam" id="TIGR00690">
    <property type="entry name" value="rpoZ"/>
    <property type="match status" value="1"/>
</dbReference>
<dbReference type="PANTHER" id="PTHR34476">
    <property type="entry name" value="DNA-DIRECTED RNA POLYMERASE SUBUNIT OMEGA"/>
    <property type="match status" value="1"/>
</dbReference>
<dbReference type="PANTHER" id="PTHR34476:SF1">
    <property type="entry name" value="DNA-DIRECTED RNA POLYMERASE SUBUNIT OMEGA"/>
    <property type="match status" value="1"/>
</dbReference>
<dbReference type="Pfam" id="PF01192">
    <property type="entry name" value="RNA_pol_Rpb6"/>
    <property type="match status" value="1"/>
</dbReference>
<dbReference type="SMART" id="SM01409">
    <property type="entry name" value="RNA_pol_Rpb6"/>
    <property type="match status" value="1"/>
</dbReference>
<dbReference type="SUPFAM" id="SSF63562">
    <property type="entry name" value="RPB6/omega subunit-like"/>
    <property type="match status" value="1"/>
</dbReference>
<accession>A0Q5J3</accession>
<proteinExistence type="inferred from homology"/>
<protein>
    <recommendedName>
        <fullName evidence="1">DNA-directed RNA polymerase subunit omega</fullName>
        <shortName evidence="1">RNAP omega subunit</shortName>
        <ecNumber evidence="1">2.7.7.6</ecNumber>
    </recommendedName>
    <alternativeName>
        <fullName evidence="1">RNA polymerase omega subunit</fullName>
    </alternativeName>
    <alternativeName>
        <fullName evidence="1">Transcriptase subunit omega</fullName>
    </alternativeName>
</protein>
<comment type="function">
    <text evidence="1">Promotes RNA polymerase assembly. Latches the N- and C-terminal regions of the beta' subunit thereby facilitating its interaction with the beta and alpha subunits.</text>
</comment>
<comment type="catalytic activity">
    <reaction evidence="1">
        <text>RNA(n) + a ribonucleoside 5'-triphosphate = RNA(n+1) + diphosphate</text>
        <dbReference type="Rhea" id="RHEA:21248"/>
        <dbReference type="Rhea" id="RHEA-COMP:14527"/>
        <dbReference type="Rhea" id="RHEA-COMP:17342"/>
        <dbReference type="ChEBI" id="CHEBI:33019"/>
        <dbReference type="ChEBI" id="CHEBI:61557"/>
        <dbReference type="ChEBI" id="CHEBI:140395"/>
        <dbReference type="EC" id="2.7.7.6"/>
    </reaction>
</comment>
<comment type="subunit">
    <text evidence="1">The RNAP catalytic core consists of 2 alpha, 1 beta, 1 beta' and 1 omega subunit. When a sigma factor is associated with the core the holoenzyme is formed, which can initiate transcription.</text>
</comment>
<comment type="similarity">
    <text evidence="1">Belongs to the RNA polymerase subunit omega family.</text>
</comment>
<reference key="1">
    <citation type="journal article" date="2007" name="Genome Biol.">
        <title>Comparison of Francisella tularensis genomes reveals evolutionary events associated with the emergence of human pathogenic strains.</title>
        <authorList>
            <person name="Rohmer L."/>
            <person name="Fong C."/>
            <person name="Abmayr S."/>
            <person name="Wasnick M."/>
            <person name="Larson Freeman T.J."/>
            <person name="Radey M."/>
            <person name="Guina T."/>
            <person name="Svensson K."/>
            <person name="Hayden H.S."/>
            <person name="Jacobs M."/>
            <person name="Gallagher L.A."/>
            <person name="Manoil C."/>
            <person name="Ernst R.K."/>
            <person name="Drees B."/>
            <person name="Buckley D."/>
            <person name="Haugen E."/>
            <person name="Bovee D."/>
            <person name="Zhou Y."/>
            <person name="Chang J."/>
            <person name="Levy R."/>
            <person name="Lim R."/>
            <person name="Gillett W."/>
            <person name="Guenthener D."/>
            <person name="Kang A."/>
            <person name="Shaffer S.A."/>
            <person name="Taylor G."/>
            <person name="Chen J."/>
            <person name="Gallis B."/>
            <person name="D'Argenio D.A."/>
            <person name="Forsman M."/>
            <person name="Olson M.V."/>
            <person name="Goodlett D.R."/>
            <person name="Kaul R."/>
            <person name="Miller S.I."/>
            <person name="Brittnacher M.J."/>
        </authorList>
    </citation>
    <scope>NUCLEOTIDE SEQUENCE [LARGE SCALE GENOMIC DNA]</scope>
    <source>
        <strain>U112</strain>
    </source>
</reference>
<sequence>MARVTVEDCLDKVETRFDLVVLASMRANKILKNGYSESMENEKKEKATVVALREIAESEITPEQILRNEIEG</sequence>
<evidence type="ECO:0000255" key="1">
    <source>
        <dbReference type="HAMAP-Rule" id="MF_00366"/>
    </source>
</evidence>
<keyword id="KW-0240">DNA-directed RNA polymerase</keyword>
<keyword id="KW-0548">Nucleotidyltransferase</keyword>
<keyword id="KW-0804">Transcription</keyword>
<keyword id="KW-0808">Transferase</keyword>